<gene>
    <name evidence="7" type="primary">hsp-6</name>
    <name evidence="5" type="synonym">hsp70f</name>
    <name evidence="7" type="synonym">mot-2</name>
    <name evidence="7" type="ORF">C37H5.8</name>
</gene>
<sequence>MLSARSFLSSARTIARSSLMSARSLSDKPKGHVIGIDLGTTNSCVSIMEGKTPKVIENAEGVRTTPSTVAFTADGERLVGAPAKRQAVTNSANTLFATKRLIGRRYEDPEVQKDLKVVPYKIVKASNGDAWVEAQGKVYSPSQVGAFVLMKMKETAESYLGTTVNNAVVTVPAYFNDSQRQATKDAGQISGLNVLRVINEPTAAALAYGLDKDAGDKIIAVYDLGGGTFDVSILEIQKGVFEVKSTNGDTFLGGEDFDHALVHHLVGEFKKEQGVDLTKDPQAMQRLREAAEKAKCELSSTTQTDINLPYITMDQSGPKHLNLKLTRAKFEQIVGDLIKRTIEPCRKALHDAEVKSSQIADVLLVGGMSRMPKVQATVQEIFGKVPSKAVNPDEAVAMGAAIQGAVLAGDVTDVLLLDVTPLSLGIETLGGIMTKLITRNTTIPTKKSQVFSTAADGQTQVQIKVFQGEREMATSNKLLGQFSLVGIPPAPRGVPQVEVTFDIDANGIVNVSARDRGTGKEQQIVIQSSGGLSKDQIENMIKEAEKNAAEDAKRKELVEVINQAEGIIHDTEAKMTEFADQLPKDECEALRTKIADTKKILDNKDNETPEAIKEACNTLQQQSLKLFEAAYKNMAAKNSGGDAQEAKTAEEPKKEQN</sequence>
<reference key="1">
    <citation type="journal article" date="1998" name="Science">
        <title>Genome sequence of the nematode C. elegans: a platform for investigating biology.</title>
        <authorList>
            <consortium name="The C. elegans sequencing consortium"/>
        </authorList>
    </citation>
    <scope>NUCLEOTIDE SEQUENCE [LARGE SCALE GENOMIC DNA]</scope>
    <source>
        <strain>Bristol N2</strain>
    </source>
</reference>
<reference key="2">
    <citation type="journal article" date="1989" name="DNA">
        <title>Characterization of the hsp70 multigene family of Caenorhabditis elegans.</title>
        <authorList>
            <person name="Heschl M.F.P."/>
            <person name="Baillie D.L."/>
        </authorList>
    </citation>
    <scope>NUCLEOTIDE SEQUENCE [GENOMIC DNA] OF 1-487</scope>
    <source>
        <strain>Bristol N2</strain>
    </source>
</reference>
<reference key="3">
    <citation type="journal article" date="2015" name="Mol. Cell">
        <title>Repression of the heat shock response is a programmed event at the onset of reproduction.</title>
        <authorList>
            <person name="Labbadia J."/>
            <person name="Morimoto R.I."/>
        </authorList>
    </citation>
    <scope>INDUCTION BY MITOCHONDRIAL STRESS</scope>
</reference>
<reference key="4">
    <citation type="journal article" date="2018" name="Nat. Commun.">
        <title>Visible light reduces C. elegans longevity.</title>
        <authorList>
            <person name="De Magalhaes Filho C.D."/>
            <person name="Henriquez B."/>
            <person name="Seah N.E."/>
            <person name="Evans R.M."/>
            <person name="Lapierre L.R."/>
            <person name="Dillin A."/>
        </authorList>
    </citation>
    <scope>INDUCTION</scope>
</reference>
<dbReference type="EMBL" id="BX284605">
    <property type="protein sequence ID" value="CCD66987.1"/>
    <property type="molecule type" value="Genomic_DNA"/>
</dbReference>
<dbReference type="EMBL" id="X07678">
    <property type="protein sequence ID" value="CAA30525.1"/>
    <property type="molecule type" value="Genomic_DNA"/>
</dbReference>
<dbReference type="PIR" id="B32475">
    <property type="entry name" value="B32475"/>
</dbReference>
<dbReference type="PIR" id="T25613">
    <property type="entry name" value="T25613"/>
</dbReference>
<dbReference type="RefSeq" id="NP_001370558.1">
    <property type="nucleotide sequence ID" value="NM_001383301.1"/>
</dbReference>
<dbReference type="RefSeq" id="NP_504291.1">
    <property type="nucleotide sequence ID" value="NM_071890.4"/>
</dbReference>
<dbReference type="PDB" id="3DQG">
    <property type="method" value="X-ray"/>
    <property type="resolution" value="1.72 A"/>
    <property type="chains" value="A/B/C/D=418-565"/>
</dbReference>
<dbReference type="PDBsum" id="3DQG"/>
<dbReference type="SMR" id="P11141"/>
<dbReference type="BioGRID" id="43923">
    <property type="interactions" value="56"/>
</dbReference>
<dbReference type="FunCoup" id="P11141">
    <property type="interactions" value="2528"/>
</dbReference>
<dbReference type="IntAct" id="P11141">
    <property type="interactions" value="2"/>
</dbReference>
<dbReference type="STRING" id="6239.C37H5.8.1"/>
<dbReference type="PaxDb" id="6239-C37H5.8"/>
<dbReference type="PeptideAtlas" id="P11141"/>
<dbReference type="EnsemblMetazoa" id="C37H5.8.1">
    <property type="protein sequence ID" value="C37H5.8.1"/>
    <property type="gene ID" value="WBGene00002010"/>
</dbReference>
<dbReference type="GeneID" id="178873"/>
<dbReference type="UCSC" id="C37H5.8">
    <property type="organism name" value="c. elegans"/>
</dbReference>
<dbReference type="AGR" id="WB:WBGene00002010"/>
<dbReference type="WormBase" id="C37H5.8">
    <property type="protein sequence ID" value="CE08631"/>
    <property type="gene ID" value="WBGene00002010"/>
    <property type="gene designation" value="hsp-6"/>
</dbReference>
<dbReference type="eggNOG" id="KOG0102">
    <property type="taxonomic scope" value="Eukaryota"/>
</dbReference>
<dbReference type="GeneTree" id="ENSGT00920000149123"/>
<dbReference type="HOGENOM" id="CLU_005965_2_1_1"/>
<dbReference type="InParanoid" id="P11141"/>
<dbReference type="OMA" id="MGTDWKI"/>
<dbReference type="OrthoDB" id="2401965at2759"/>
<dbReference type="PhylomeDB" id="P11141"/>
<dbReference type="Reactome" id="R-CEL-3371453">
    <property type="pathway name" value="Regulation of HSF1-mediated heat shock response"/>
</dbReference>
<dbReference type="Reactome" id="R-CEL-9837999">
    <property type="pathway name" value="Mitochondrial protein degradation"/>
</dbReference>
<dbReference type="EvolutionaryTrace" id="P11141"/>
<dbReference type="PRO" id="PR:P11141"/>
<dbReference type="Proteomes" id="UP000001940">
    <property type="component" value="Chromosome V"/>
</dbReference>
<dbReference type="Bgee" id="WBGene00002010">
    <property type="expression patterns" value="Expressed in pharyngeal muscle cell (C elegans) and 4 other cell types or tissues"/>
</dbReference>
<dbReference type="GO" id="GO:0005737">
    <property type="term" value="C:cytoplasm"/>
    <property type="evidence" value="ECO:0000318"/>
    <property type="project" value="GO_Central"/>
</dbReference>
<dbReference type="GO" id="GO:0005739">
    <property type="term" value="C:mitochondrion"/>
    <property type="evidence" value="ECO:0000314"/>
    <property type="project" value="WormBase"/>
</dbReference>
<dbReference type="GO" id="GO:0005524">
    <property type="term" value="F:ATP binding"/>
    <property type="evidence" value="ECO:0007669"/>
    <property type="project" value="UniProtKB-KW"/>
</dbReference>
<dbReference type="GO" id="GO:0016887">
    <property type="term" value="F:ATP hydrolysis activity"/>
    <property type="evidence" value="ECO:0000318"/>
    <property type="project" value="GO_Central"/>
</dbReference>
<dbReference type="GO" id="GO:0140662">
    <property type="term" value="F:ATP-dependent protein folding chaperone"/>
    <property type="evidence" value="ECO:0007669"/>
    <property type="project" value="InterPro"/>
</dbReference>
<dbReference type="GO" id="GO:0031072">
    <property type="term" value="F:heat shock protein binding"/>
    <property type="evidence" value="ECO:0000318"/>
    <property type="project" value="GO_Central"/>
</dbReference>
<dbReference type="GO" id="GO:0044183">
    <property type="term" value="F:protein folding chaperone"/>
    <property type="evidence" value="ECO:0000318"/>
    <property type="project" value="GO_Central"/>
</dbReference>
<dbReference type="GO" id="GO:0051082">
    <property type="term" value="F:unfolded protein binding"/>
    <property type="evidence" value="ECO:0007669"/>
    <property type="project" value="InterPro"/>
</dbReference>
<dbReference type="GO" id="GO:0051085">
    <property type="term" value="P:chaperone cofactor-dependent protein refolding"/>
    <property type="evidence" value="ECO:0000318"/>
    <property type="project" value="GO_Central"/>
</dbReference>
<dbReference type="GO" id="GO:0016226">
    <property type="term" value="P:iron-sulfur cluster assembly"/>
    <property type="evidence" value="ECO:0000318"/>
    <property type="project" value="GO_Central"/>
</dbReference>
<dbReference type="GO" id="GO:0034514">
    <property type="term" value="P:mitochondrial unfolded protein response"/>
    <property type="evidence" value="ECO:0000315"/>
    <property type="project" value="WormBase"/>
</dbReference>
<dbReference type="GO" id="GO:0042026">
    <property type="term" value="P:protein refolding"/>
    <property type="evidence" value="ECO:0000318"/>
    <property type="project" value="GO_Central"/>
</dbReference>
<dbReference type="CDD" id="cd11733">
    <property type="entry name" value="ASKHA_NBD_HSP70_HSPA9"/>
    <property type="match status" value="1"/>
</dbReference>
<dbReference type="FunFam" id="2.60.34.10:FF:000014">
    <property type="entry name" value="Chaperone protein DnaK HSP70"/>
    <property type="match status" value="1"/>
</dbReference>
<dbReference type="FunFam" id="3.30.420.40:FF:000020">
    <property type="entry name" value="Chaperone protein HscA homolog"/>
    <property type="match status" value="1"/>
</dbReference>
<dbReference type="FunFam" id="3.30.30.30:FF:000003">
    <property type="entry name" value="Heat shock protein 9"/>
    <property type="match status" value="1"/>
</dbReference>
<dbReference type="FunFam" id="3.30.420.40:FF:000004">
    <property type="entry name" value="Molecular chaperone DnaK"/>
    <property type="match status" value="1"/>
</dbReference>
<dbReference type="FunFam" id="3.90.640.10:FF:000003">
    <property type="entry name" value="Molecular chaperone DnaK"/>
    <property type="match status" value="1"/>
</dbReference>
<dbReference type="Gene3D" id="1.20.1270.10">
    <property type="match status" value="1"/>
</dbReference>
<dbReference type="Gene3D" id="3.30.420.40">
    <property type="match status" value="2"/>
</dbReference>
<dbReference type="Gene3D" id="3.90.640.10">
    <property type="entry name" value="Actin, Chain A, domain 4"/>
    <property type="match status" value="1"/>
</dbReference>
<dbReference type="Gene3D" id="2.60.34.10">
    <property type="entry name" value="Substrate Binding Domain Of DNAk, Chain A, domain 1"/>
    <property type="match status" value="1"/>
</dbReference>
<dbReference type="HAMAP" id="MF_00332">
    <property type="entry name" value="DnaK"/>
    <property type="match status" value="1"/>
</dbReference>
<dbReference type="InterPro" id="IPR043129">
    <property type="entry name" value="ATPase_NBD"/>
</dbReference>
<dbReference type="InterPro" id="IPR012725">
    <property type="entry name" value="Chaperone_DnaK"/>
</dbReference>
<dbReference type="InterPro" id="IPR018181">
    <property type="entry name" value="Heat_shock_70_CS"/>
</dbReference>
<dbReference type="InterPro" id="IPR029048">
    <property type="entry name" value="HSP70_C_sf"/>
</dbReference>
<dbReference type="InterPro" id="IPR029047">
    <property type="entry name" value="HSP70_peptide-bd_sf"/>
</dbReference>
<dbReference type="InterPro" id="IPR013126">
    <property type="entry name" value="Hsp_70_fam"/>
</dbReference>
<dbReference type="NCBIfam" id="NF001413">
    <property type="entry name" value="PRK00290.1"/>
    <property type="match status" value="1"/>
</dbReference>
<dbReference type="NCBIfam" id="TIGR02350">
    <property type="entry name" value="prok_dnaK"/>
    <property type="match status" value="1"/>
</dbReference>
<dbReference type="PANTHER" id="PTHR19375">
    <property type="entry name" value="HEAT SHOCK PROTEIN 70KDA"/>
    <property type="match status" value="1"/>
</dbReference>
<dbReference type="Pfam" id="PF00012">
    <property type="entry name" value="HSP70"/>
    <property type="match status" value="1"/>
</dbReference>
<dbReference type="PRINTS" id="PR00301">
    <property type="entry name" value="HEATSHOCK70"/>
</dbReference>
<dbReference type="SUPFAM" id="SSF53067">
    <property type="entry name" value="Actin-like ATPase domain"/>
    <property type="match status" value="2"/>
</dbReference>
<dbReference type="SUPFAM" id="SSF100934">
    <property type="entry name" value="Heat shock protein 70kD (HSP70), C-terminal subdomain"/>
    <property type="match status" value="1"/>
</dbReference>
<dbReference type="SUPFAM" id="SSF100920">
    <property type="entry name" value="Heat shock protein 70kD (HSP70), peptide-binding domain"/>
    <property type="match status" value="1"/>
</dbReference>
<dbReference type="PROSITE" id="PS00297">
    <property type="entry name" value="HSP70_1"/>
    <property type="match status" value="1"/>
</dbReference>
<dbReference type="PROSITE" id="PS00329">
    <property type="entry name" value="HSP70_2"/>
    <property type="match status" value="1"/>
</dbReference>
<dbReference type="PROSITE" id="PS01036">
    <property type="entry name" value="HSP70_3"/>
    <property type="match status" value="1"/>
</dbReference>
<comment type="subcellular location">
    <subcellularLocation>
        <location>Mitochondrion</location>
    </subcellularLocation>
</comment>
<comment type="induction">
    <text evidence="3 4">By mitochondrial stress. Induced by white light exposure (PubMed:29500338).</text>
</comment>
<comment type="similarity">
    <text evidence="6">Belongs to the heat shock protein 70 family.</text>
</comment>
<protein>
    <recommendedName>
        <fullName evidence="6">Heat shock protein hsp-6</fullName>
    </recommendedName>
    <alternativeName>
        <fullName evidence="5">Heat shock 70 kDa protein F, mitochondrial</fullName>
    </alternativeName>
</protein>
<feature type="transit peptide" description="Mitochondrion" evidence="1">
    <location>
        <begin position="1"/>
        <end position="27"/>
    </location>
</feature>
<feature type="chain" id="PRO_0000013543" description="Heat shock protein hsp-6">
    <location>
        <begin position="28"/>
        <end position="657"/>
    </location>
</feature>
<feature type="region of interest" description="Disordered" evidence="2">
    <location>
        <begin position="637"/>
        <end position="657"/>
    </location>
</feature>
<feature type="compositionally biased region" description="Basic and acidic residues" evidence="2">
    <location>
        <begin position="644"/>
        <end position="657"/>
    </location>
</feature>
<feature type="sequence conflict" description="In Ref. 2; CAA30525." evidence="6" ref="2">
    <original>V</original>
    <variation>E</variation>
    <location>
        <position position="138"/>
    </location>
</feature>
<feature type="sequence conflict" description="In Ref. 2; CAA30525." evidence="6" ref="2">
    <original>S</original>
    <variation>P</variation>
    <location>
        <position position="140"/>
    </location>
</feature>
<feature type="sequence conflict" description="In Ref. 2; CAA30525." evidence="6" ref="2">
    <original>A</original>
    <variation>P</variation>
    <location>
        <position position="167"/>
    </location>
</feature>
<feature type="sequence conflict" description="In Ref. 2; CAA30525." evidence="6" ref="2">
    <original>KA</original>
    <variation>NV</variation>
    <location>
        <begin position="347"/>
        <end position="348"/>
    </location>
</feature>
<feature type="strand" evidence="8">
    <location>
        <begin position="424"/>
        <end position="428"/>
    </location>
</feature>
<feature type="turn" evidence="8">
    <location>
        <begin position="429"/>
        <end position="431"/>
    </location>
</feature>
<feature type="strand" evidence="8">
    <location>
        <begin position="432"/>
        <end position="437"/>
    </location>
</feature>
<feature type="strand" evidence="8">
    <location>
        <begin position="442"/>
        <end position="455"/>
    </location>
</feature>
<feature type="strand" evidence="8">
    <location>
        <begin position="460"/>
        <end position="469"/>
    </location>
</feature>
<feature type="helix" evidence="8">
    <location>
        <begin position="473"/>
        <end position="475"/>
    </location>
</feature>
<feature type="strand" evidence="8">
    <location>
        <begin position="476"/>
        <end position="485"/>
    </location>
</feature>
<feature type="strand" evidence="8">
    <location>
        <begin position="497"/>
        <end position="503"/>
    </location>
</feature>
<feature type="strand" evidence="8">
    <location>
        <begin position="507"/>
        <end position="515"/>
    </location>
</feature>
<feature type="turn" evidence="8">
    <location>
        <begin position="516"/>
        <end position="518"/>
    </location>
</feature>
<feature type="strand" evidence="8">
    <location>
        <begin position="521"/>
        <end position="527"/>
    </location>
</feature>
<feature type="strand" evidence="8">
    <location>
        <begin position="529"/>
        <end position="532"/>
    </location>
</feature>
<feature type="helix" evidence="8">
    <location>
        <begin position="534"/>
        <end position="551"/>
    </location>
</feature>
<feature type="strand" evidence="8">
    <location>
        <begin position="557"/>
        <end position="559"/>
    </location>
</feature>
<accession>P11141</accession>
<accession>P91135</accession>
<organism>
    <name type="scientific">Caenorhabditis elegans</name>
    <dbReference type="NCBI Taxonomy" id="6239"/>
    <lineage>
        <taxon>Eukaryota</taxon>
        <taxon>Metazoa</taxon>
        <taxon>Ecdysozoa</taxon>
        <taxon>Nematoda</taxon>
        <taxon>Chromadorea</taxon>
        <taxon>Rhabditida</taxon>
        <taxon>Rhabditina</taxon>
        <taxon>Rhabditomorpha</taxon>
        <taxon>Rhabditoidea</taxon>
        <taxon>Rhabditidae</taxon>
        <taxon>Peloderinae</taxon>
        <taxon>Caenorhabditis</taxon>
    </lineage>
</organism>
<name>HSP6_CAEEL</name>
<evidence type="ECO:0000255" key="1"/>
<evidence type="ECO:0000256" key="2">
    <source>
        <dbReference type="SAM" id="MobiDB-lite"/>
    </source>
</evidence>
<evidence type="ECO:0000269" key="3">
    <source>
    </source>
</evidence>
<evidence type="ECO:0000269" key="4">
    <source>
    </source>
</evidence>
<evidence type="ECO:0000303" key="5">
    <source>
    </source>
</evidence>
<evidence type="ECO:0000305" key="6"/>
<evidence type="ECO:0000312" key="7">
    <source>
        <dbReference type="WormBase" id="C37H5.8"/>
    </source>
</evidence>
<evidence type="ECO:0007829" key="8">
    <source>
        <dbReference type="PDB" id="3DQG"/>
    </source>
</evidence>
<proteinExistence type="evidence at protein level"/>
<keyword id="KW-0002">3D-structure</keyword>
<keyword id="KW-0067">ATP-binding</keyword>
<keyword id="KW-0496">Mitochondrion</keyword>
<keyword id="KW-0547">Nucleotide-binding</keyword>
<keyword id="KW-1185">Reference proteome</keyword>
<keyword id="KW-0346">Stress response</keyword>
<keyword id="KW-0809">Transit peptide</keyword>